<evidence type="ECO:0000269" key="1">
    <source>
    </source>
</evidence>
<evidence type="ECO:0000303" key="2">
    <source>
    </source>
</evidence>
<evidence type="ECO:0000305" key="3"/>
<evidence type="ECO:0000305" key="4">
    <source>
    </source>
</evidence>
<organism>
    <name type="scientific">Tityus obscurus</name>
    <name type="common">Amazonian scorpion</name>
    <name type="synonym">Tityus cambridgei</name>
    <dbReference type="NCBI Taxonomy" id="1221240"/>
    <lineage>
        <taxon>Eukaryota</taxon>
        <taxon>Metazoa</taxon>
        <taxon>Ecdysozoa</taxon>
        <taxon>Arthropoda</taxon>
        <taxon>Chelicerata</taxon>
        <taxon>Arachnida</taxon>
        <taxon>Scorpiones</taxon>
        <taxon>Buthida</taxon>
        <taxon>Buthoidea</taxon>
        <taxon>Buthidae</taxon>
        <taxon>Tityus</taxon>
    </lineage>
</organism>
<sequence length="9" mass="955">KETNAKPPA</sequence>
<comment type="function">
    <text evidence="1 4">May act to induce hypotension (Probable). Presents weak hemolytic activity at physiological concentrations (micromolar range), and weak lactate dehydrogenase (LDH) release from mast cells. Does not induce mast cell degranulation, and antimicrobial effects. In vivo, injection into mice induces increase in nociceptive sensibility and causes very reduced or no edema formation. It also causes no alteration in rearing (standing on hind limbs), and reduces locomotion, suggesting an increase in anxiety (PubMed:28918200).</text>
</comment>
<comment type="subcellular location">
    <subcellularLocation>
        <location evidence="1">Secreted</location>
    </subcellularLocation>
</comment>
<comment type="tissue specificity">
    <text evidence="4">Expressed by the venom gland.</text>
</comment>
<comment type="miscellaneous">
    <text evidence="3">The primary structure of this cryptide Pep-7 is identical to that of cryptide TyPep-8 from Tityus serrulatus (AC P84190).</text>
</comment>
<protein>
    <recommendedName>
        <fullName evidence="2">Cryptide Pep-7</fullName>
    </recommendedName>
</protein>
<keyword id="KW-0204">Cytolysis</keyword>
<keyword id="KW-0903">Direct protein sequencing</keyword>
<keyword id="KW-0964">Secreted</keyword>
<name>CRY7_TITOB</name>
<dbReference type="GO" id="GO:0005576">
    <property type="term" value="C:extracellular region"/>
    <property type="evidence" value="ECO:0007669"/>
    <property type="project" value="UniProtKB-SubCell"/>
</dbReference>
<dbReference type="GO" id="GO:0031640">
    <property type="term" value="P:killing of cells of another organism"/>
    <property type="evidence" value="ECO:0007669"/>
    <property type="project" value="UniProtKB-KW"/>
</dbReference>
<feature type="peptide" id="PRO_0000461742" description="Cryptide Pep-7" evidence="1">
    <location>
        <begin position="1"/>
        <end position="9"/>
    </location>
</feature>
<reference key="1">
    <citation type="journal article" date="2018" name="J. Proteomics">
        <title>Profiling the short, linear, non-disulfide bond-containing peptidome from the venom of the scorpion Tityus obscurus.</title>
        <authorList>
            <person name="Dias N.B."/>
            <person name="de Souza B.M."/>
            <person name="Cocchi F.K."/>
            <person name="Chalkidis H.M."/>
            <person name="Dorce V.A.C."/>
            <person name="Palma M.S."/>
        </authorList>
    </citation>
    <scope>PROTEIN SEQUENCE</scope>
    <scope>IDENTIFICATION BY MASS SPECTROMETRY</scope>
    <scope>SUBCELLULAR LOCATION</scope>
    <scope>SYNTHESIS</scope>
    <scope>FUNCTION</scope>
    <scope>BIOASSAY</scope>
    <source>
        <tissue>Venom</tissue>
    </source>
</reference>
<accession>P0DRF2</accession>
<proteinExistence type="evidence at protein level"/>